<sequence>MVNYPNGRSQSYSAVPKKQKTLTELSVAKKSAPKSKSLVAFGKRGMNFEAEINATNDYYLSRGLAVIHKKPTPIQIVKVDYPQRSRAKITEAYFRQASTTDYSGVYKGHYVDFEAKETHQKTVFPLKNFHEHQIVHMSNVLAQRGIAFVLLHFADLEETYLLPSSYLITFYYEKNGLKSIPLAYIRENGYKIETNHIPRIPYLEIVNKLCEVQ</sequence>
<dbReference type="EC" id="3.1.21.10" evidence="1"/>
<dbReference type="EMBL" id="CP000425">
    <property type="protein sequence ID" value="ABJ72136.1"/>
    <property type="molecule type" value="Genomic_DNA"/>
</dbReference>
<dbReference type="RefSeq" id="WP_011675554.1">
    <property type="nucleotide sequence ID" value="NC_008527.1"/>
</dbReference>
<dbReference type="SMR" id="Q031I6"/>
<dbReference type="KEGG" id="llc:LACR_0543"/>
<dbReference type="HOGENOM" id="CLU_096340_0_0_9"/>
<dbReference type="Proteomes" id="UP000000240">
    <property type="component" value="Chromosome"/>
</dbReference>
<dbReference type="GO" id="GO:0005737">
    <property type="term" value="C:cytoplasm"/>
    <property type="evidence" value="ECO:0007669"/>
    <property type="project" value="UniProtKB-SubCell"/>
</dbReference>
<dbReference type="GO" id="GO:0004519">
    <property type="term" value="F:endonuclease activity"/>
    <property type="evidence" value="ECO:0007669"/>
    <property type="project" value="UniProtKB-UniRule"/>
</dbReference>
<dbReference type="GO" id="GO:0000287">
    <property type="term" value="F:magnesium ion binding"/>
    <property type="evidence" value="ECO:0007669"/>
    <property type="project" value="UniProtKB-UniRule"/>
</dbReference>
<dbReference type="GO" id="GO:0003676">
    <property type="term" value="F:nucleic acid binding"/>
    <property type="evidence" value="ECO:0007669"/>
    <property type="project" value="InterPro"/>
</dbReference>
<dbReference type="GO" id="GO:0007059">
    <property type="term" value="P:chromosome segregation"/>
    <property type="evidence" value="ECO:0007669"/>
    <property type="project" value="UniProtKB-UniRule"/>
</dbReference>
<dbReference type="GO" id="GO:0006310">
    <property type="term" value="P:DNA recombination"/>
    <property type="evidence" value="ECO:0007669"/>
    <property type="project" value="UniProtKB-UniRule"/>
</dbReference>
<dbReference type="GO" id="GO:0006281">
    <property type="term" value="P:DNA repair"/>
    <property type="evidence" value="ECO:0007669"/>
    <property type="project" value="UniProtKB-UniRule"/>
</dbReference>
<dbReference type="CDD" id="cd22354">
    <property type="entry name" value="RecU-like"/>
    <property type="match status" value="1"/>
</dbReference>
<dbReference type="Gene3D" id="3.40.1350.10">
    <property type="match status" value="1"/>
</dbReference>
<dbReference type="HAMAP" id="MF_00130">
    <property type="entry name" value="RecU"/>
    <property type="match status" value="1"/>
</dbReference>
<dbReference type="InterPro" id="IPR004612">
    <property type="entry name" value="Resolv_RecU"/>
</dbReference>
<dbReference type="InterPro" id="IPR011335">
    <property type="entry name" value="Restrct_endonuc-II-like"/>
</dbReference>
<dbReference type="InterPro" id="IPR011856">
    <property type="entry name" value="tRNA_endonuc-like_dom_sf"/>
</dbReference>
<dbReference type="NCBIfam" id="NF002580">
    <property type="entry name" value="PRK02234.1-1"/>
    <property type="match status" value="1"/>
</dbReference>
<dbReference type="NCBIfam" id="NF002584">
    <property type="entry name" value="PRK02234.1-5"/>
    <property type="match status" value="1"/>
</dbReference>
<dbReference type="NCBIfam" id="TIGR00648">
    <property type="entry name" value="recU"/>
    <property type="match status" value="1"/>
</dbReference>
<dbReference type="Pfam" id="PF03838">
    <property type="entry name" value="RecU"/>
    <property type="match status" value="1"/>
</dbReference>
<dbReference type="PIRSF" id="PIRSF037785">
    <property type="entry name" value="RecU"/>
    <property type="match status" value="1"/>
</dbReference>
<dbReference type="SUPFAM" id="SSF52980">
    <property type="entry name" value="Restriction endonuclease-like"/>
    <property type="match status" value="1"/>
</dbReference>
<gene>
    <name evidence="1" type="primary">recU</name>
    <name type="ordered locus">LACR_0543</name>
</gene>
<feature type="chain" id="PRO_1000016731" description="Holliday junction resolvase RecU">
    <location>
        <begin position="1"/>
        <end position="213"/>
    </location>
</feature>
<feature type="binding site" evidence="1">
    <location>
        <position position="99"/>
    </location>
    <ligand>
        <name>Mg(2+)</name>
        <dbReference type="ChEBI" id="CHEBI:18420"/>
    </ligand>
</feature>
<feature type="binding site" evidence="1">
    <location>
        <position position="101"/>
    </location>
    <ligand>
        <name>Mg(2+)</name>
        <dbReference type="ChEBI" id="CHEBI:18420"/>
    </ligand>
</feature>
<feature type="binding site" evidence="1">
    <location>
        <position position="114"/>
    </location>
    <ligand>
        <name>Mg(2+)</name>
        <dbReference type="ChEBI" id="CHEBI:18420"/>
    </ligand>
</feature>
<feature type="binding site" evidence="1">
    <location>
        <position position="133"/>
    </location>
    <ligand>
        <name>Mg(2+)</name>
        <dbReference type="ChEBI" id="CHEBI:18420"/>
    </ligand>
</feature>
<feature type="site" description="Transition state stabilizer" evidence="1">
    <location>
        <position position="116"/>
    </location>
</feature>
<protein>
    <recommendedName>
        <fullName evidence="1">Holliday junction resolvase RecU</fullName>
        <ecNumber evidence="1">3.1.21.10</ecNumber>
    </recommendedName>
    <alternativeName>
        <fullName evidence="1">Recombination protein U homolog</fullName>
    </alternativeName>
</protein>
<organism>
    <name type="scientific">Lactococcus lactis subsp. cremoris (strain SK11)</name>
    <dbReference type="NCBI Taxonomy" id="272622"/>
    <lineage>
        <taxon>Bacteria</taxon>
        <taxon>Bacillati</taxon>
        <taxon>Bacillota</taxon>
        <taxon>Bacilli</taxon>
        <taxon>Lactobacillales</taxon>
        <taxon>Streptococcaceae</taxon>
        <taxon>Lactococcus</taxon>
        <taxon>Lactococcus cremoris subsp. cremoris</taxon>
    </lineage>
</organism>
<comment type="function">
    <text evidence="1">Endonuclease that resolves Holliday junction intermediates in genetic recombination. Cleaves mobile four-strand junctions by introducing symmetrical nicks in paired strands. Promotes annealing of linear ssDNA with homologous dsDNA. Required for DNA repair, homologous recombination and chromosome segregation.</text>
</comment>
<comment type="catalytic activity">
    <reaction evidence="1">
        <text>Endonucleolytic cleavage at a junction such as a reciprocal single-stranded crossover between two homologous DNA duplexes (Holliday junction).</text>
        <dbReference type="EC" id="3.1.21.10"/>
    </reaction>
</comment>
<comment type="cofactor">
    <cofactor evidence="1">
        <name>Mg(2+)</name>
        <dbReference type="ChEBI" id="CHEBI:18420"/>
    </cofactor>
    <text evidence="1">Binds 1 Mg(2+) ion per subunit.</text>
</comment>
<comment type="subcellular location">
    <subcellularLocation>
        <location evidence="1">Cytoplasm</location>
    </subcellularLocation>
</comment>
<comment type="similarity">
    <text evidence="1">Belongs to the RecU family.</text>
</comment>
<name>RECU_LACLS</name>
<evidence type="ECO:0000255" key="1">
    <source>
        <dbReference type="HAMAP-Rule" id="MF_00130"/>
    </source>
</evidence>
<keyword id="KW-0963">Cytoplasm</keyword>
<keyword id="KW-0227">DNA damage</keyword>
<keyword id="KW-0233">DNA recombination</keyword>
<keyword id="KW-0234">DNA repair</keyword>
<keyword id="KW-0255">Endonuclease</keyword>
<keyword id="KW-0378">Hydrolase</keyword>
<keyword id="KW-0460">Magnesium</keyword>
<keyword id="KW-0479">Metal-binding</keyword>
<keyword id="KW-0540">Nuclease</keyword>
<accession>Q031I6</accession>
<reference key="1">
    <citation type="journal article" date="2006" name="Proc. Natl. Acad. Sci. U.S.A.">
        <title>Comparative genomics of the lactic acid bacteria.</title>
        <authorList>
            <person name="Makarova K.S."/>
            <person name="Slesarev A."/>
            <person name="Wolf Y.I."/>
            <person name="Sorokin A."/>
            <person name="Mirkin B."/>
            <person name="Koonin E.V."/>
            <person name="Pavlov A."/>
            <person name="Pavlova N."/>
            <person name="Karamychev V."/>
            <person name="Polouchine N."/>
            <person name="Shakhova V."/>
            <person name="Grigoriev I."/>
            <person name="Lou Y."/>
            <person name="Rohksar D."/>
            <person name="Lucas S."/>
            <person name="Huang K."/>
            <person name="Goodstein D.M."/>
            <person name="Hawkins T."/>
            <person name="Plengvidhya V."/>
            <person name="Welker D."/>
            <person name="Hughes J."/>
            <person name="Goh Y."/>
            <person name="Benson A."/>
            <person name="Baldwin K."/>
            <person name="Lee J.-H."/>
            <person name="Diaz-Muniz I."/>
            <person name="Dosti B."/>
            <person name="Smeianov V."/>
            <person name="Wechter W."/>
            <person name="Barabote R."/>
            <person name="Lorca G."/>
            <person name="Altermann E."/>
            <person name="Barrangou R."/>
            <person name="Ganesan B."/>
            <person name="Xie Y."/>
            <person name="Rawsthorne H."/>
            <person name="Tamir D."/>
            <person name="Parker C."/>
            <person name="Breidt F."/>
            <person name="Broadbent J.R."/>
            <person name="Hutkins R."/>
            <person name="O'Sullivan D."/>
            <person name="Steele J."/>
            <person name="Unlu G."/>
            <person name="Saier M.H. Jr."/>
            <person name="Klaenhammer T."/>
            <person name="Richardson P."/>
            <person name="Kozyavkin S."/>
            <person name="Weimer B.C."/>
            <person name="Mills D.A."/>
        </authorList>
    </citation>
    <scope>NUCLEOTIDE SEQUENCE [LARGE SCALE GENOMIC DNA]</scope>
    <source>
        <strain>SK11</strain>
    </source>
</reference>
<proteinExistence type="inferred from homology"/>